<organismHost>
    <name type="scientific">Vertebrata</name>
    <dbReference type="NCBI Taxonomy" id="7742"/>
</organismHost>
<evidence type="ECO:0000250" key="1"/>
<evidence type="ECO:0000305" key="2"/>
<organism>
    <name type="scientific">Fowlpox virus (strain NVSL)</name>
    <name type="common">FPV</name>
    <dbReference type="NCBI Taxonomy" id="928301"/>
    <lineage>
        <taxon>Viruses</taxon>
        <taxon>Varidnaviria</taxon>
        <taxon>Bamfordvirae</taxon>
        <taxon>Nucleocytoviricota</taxon>
        <taxon>Pokkesviricetes</taxon>
        <taxon>Chitovirales</taxon>
        <taxon>Poxviridae</taxon>
        <taxon>Chordopoxvirinae</taxon>
        <taxon>Avipoxvirus</taxon>
        <taxon>Fowlpox virus</taxon>
    </lineage>
</organism>
<gene>
    <name type="primary">RAP94</name>
    <name type="ordered locus">FPV141</name>
</gene>
<dbReference type="EMBL" id="AF198100">
    <property type="protein sequence ID" value="AAF44485.1"/>
    <property type="molecule type" value="Genomic_DNA"/>
</dbReference>
<dbReference type="RefSeq" id="NP_039104.1">
    <property type="nucleotide sequence ID" value="NC_002188.1"/>
</dbReference>
<dbReference type="SMR" id="Q9J589"/>
<dbReference type="GeneID" id="1486689"/>
<dbReference type="KEGG" id="vg:1486689"/>
<dbReference type="Proteomes" id="UP000008597">
    <property type="component" value="Segment"/>
</dbReference>
<dbReference type="GO" id="GO:0044423">
    <property type="term" value="C:virion component"/>
    <property type="evidence" value="ECO:0007669"/>
    <property type="project" value="UniProtKB-KW"/>
</dbReference>
<dbReference type="GO" id="GO:0003700">
    <property type="term" value="F:DNA-binding transcription factor activity"/>
    <property type="evidence" value="ECO:0007669"/>
    <property type="project" value="InterPro"/>
</dbReference>
<dbReference type="GO" id="GO:0006353">
    <property type="term" value="P:DNA-templated transcription termination"/>
    <property type="evidence" value="ECO:0007669"/>
    <property type="project" value="UniProtKB-KW"/>
</dbReference>
<dbReference type="InterPro" id="IPR004974">
    <property type="entry name" value="Pox_Rap94"/>
</dbReference>
<dbReference type="Pfam" id="PF03294">
    <property type="entry name" value="Pox_Rap94"/>
    <property type="match status" value="1"/>
</dbReference>
<protein>
    <recommendedName>
        <fullName>RNA polymerase-associated transcription-specificity factor RAP94</fullName>
    </recommendedName>
    <alternativeName>
        <fullName>Protein H4</fullName>
    </alternativeName>
    <alternativeName>
        <fullName>RPO-associated protein of 94 kDa</fullName>
    </alternativeName>
</protein>
<sequence length="798" mass="95221">MENKESVLLELVPKIKAYIKDDTVKEKSYQDFIEKNKELFICNLYNVNMITDEDIKLLYITIEQNIDIDDKSLVAIFSYIGYNFEKNIHDDNSSIDLGDRMTGDMNYNMYDTFFSTLDFIIRQKHVNILVNDEGNNDFNINYRSFTTSLSYKEDKYEQVVNEIPFNMKELLSYVSKNLDQLRFSKKYLDFAYLCRNIGIKISKRKYNVRYIFNYVIDELTIPIVIKDYLDVKYVYLEETNKAYRNNFDNDNKYFYEWGKVIIPKFKNPRLYSYFFLSNYGLCDLFMELINIKQVTFEPRKNPIEYIYVSELKFWEEGGSVDFVPCEHEIAIIDAKKVSLEYYENINKFIAKYIYYEDGLAYCNLCGINIQELNLDATDVTKISLINVTYNKSIFMSEPYNYFSHSQRFIFNTIMSFDTIMKSQMWNMKYNINRLILNFLIDINSKRHEYEKQFATEIKKGIFFLRLSANLFDIQMSSMELFYSAKILNIHFIVALVIVLNSGADFIMYYMTNKKEETNYSDLNHIISVIVFDFLKKTRTVDSKQFNTIELFTETYMKIATEELIVHYNRIKLEMERLIAIKKDRKTPNYDISIYRQIQRTDEIAFFPSCITSTKLFITYEKVVAENTEIITIKHPVRIKEGTDEDKEIFEDIMKKTTKVLIRVNDTNAYNASFFTTHIKLEVEKKKIIIPLTSLFVYNVLKYYSSNVDFYVFKFGDPFPFHYDLISQEHTNHKITGYNMLRQELLPNSNVFTYFSDSLNRQELEFSFYMFLASYVNVTEWIEENSKKIKELYIINFNN</sequence>
<name>RAP94_FOWPN</name>
<accession>Q9J589</accession>
<proteinExistence type="evidence at transcript level"/>
<comment type="function">
    <text evidence="1">DNA-directed RNA polymerase-associated factor required for the transcription of viral early genes as well as for transcription termination. Within minutes after virus entry, recruits the core RNA polymerase, the early transcription factor (ETF) and other enzymes needed for transcription initiation, elongation, and termination thereby allowing synthesis of early mRNAs which are extruded through pores in the core particle. Recruits the multifunctional J3 protein, with poly(A) polymerase-stimulatory, cap nucleoside-2'-O-methyltransferase, and transcription elongation activities. Interacts with NPH-I, a DNA-dependent ATPase required for the termination of early transcripts. Acts as a transcription termination factor by binding, together with the capping enzyme/VTF, to the termination motif 5'-UUUUUNU-3' in the nascent mRNA. Involved as well in the packaging of RNA polymerase and other components needed for early transcription in assembling virus particles (By similarity).</text>
</comment>
<comment type="subunit">
    <text evidence="1">Part of the early transcription complex composed of ETF, RAP94, and the DNA-directed RNA polymerase. Interacts (via N-terminus) with NPH-I. Interacts with J3. Interacts with ETF heterodimer (By similarity).</text>
</comment>
<comment type="subcellular location">
    <subcellularLocation>
        <location evidence="2">Virion</location>
    </subcellularLocation>
    <text evidence="1">All the enzymes and other proteins required to synthesize early mRNAs are packaged within the virion core along with the DNA genome.</text>
</comment>
<comment type="induction">
    <text>Expressed in the late phase of the viral replicative cycle.</text>
</comment>
<comment type="domain">
    <text evidence="1">Interacts with ETF via its N-terminus and with DNA-directed RNA polymerase via its C-terminus.</text>
</comment>
<comment type="similarity">
    <text evidence="2">Belongs to the poxviridae protein RAP94 family.</text>
</comment>
<feature type="chain" id="PRO_0000099123" description="RNA polymerase-associated transcription-specificity factor RAP94">
    <location>
        <begin position="1"/>
        <end position="798"/>
    </location>
</feature>
<feature type="region of interest" description="Interaction with NPH-I; required for transcription termination" evidence="1">
    <location>
        <begin position="1"/>
        <end position="195"/>
    </location>
</feature>
<feature type="region of interest" description="Interaction with J3" evidence="1">
    <location>
        <begin position="234"/>
        <end position="254"/>
    </location>
</feature>
<keyword id="KW-0426">Late protein</keyword>
<keyword id="KW-1185">Reference proteome</keyword>
<keyword id="KW-0804">Transcription</keyword>
<keyword id="KW-0805">Transcription regulation</keyword>
<keyword id="KW-0806">Transcription termination</keyword>
<keyword id="KW-0946">Virion</keyword>
<reference key="1">
    <citation type="journal article" date="2000" name="J. Virol.">
        <title>The genome of fowlpox virus.</title>
        <authorList>
            <person name="Afonso C.L."/>
            <person name="Tulman E.R."/>
            <person name="Lu Z."/>
            <person name="Zsak L."/>
            <person name="Kutish G.F."/>
            <person name="Rock D.L."/>
        </authorList>
    </citation>
    <scope>NUCLEOTIDE SEQUENCE [LARGE SCALE GENOMIC DNA]</scope>
</reference>